<evidence type="ECO:0000250" key="1"/>
<evidence type="ECO:0000305" key="2"/>
<gene>
    <name type="primary">plsB</name>
    <name type="ordered locus">VC_0093</name>
</gene>
<protein>
    <recommendedName>
        <fullName>Glycerol-3-phosphate acyltransferase</fullName>
        <shortName>GPAT</shortName>
        <ecNumber>2.3.1.15</ecNumber>
    </recommendedName>
</protein>
<feature type="chain" id="PRO_0000195235" description="Glycerol-3-phosphate acyltransferase">
    <location>
        <begin position="1"/>
        <end position="811"/>
    </location>
</feature>
<feature type="short sequence motif" description="HXXXXD motif">
    <location>
        <begin position="309"/>
        <end position="314"/>
    </location>
</feature>
<accession>Q9KVP8</accession>
<proteinExistence type="inferred from homology"/>
<keyword id="KW-0012">Acyltransferase</keyword>
<keyword id="KW-0997">Cell inner membrane</keyword>
<keyword id="KW-1003">Cell membrane</keyword>
<keyword id="KW-0444">Lipid biosynthesis</keyword>
<keyword id="KW-0443">Lipid metabolism</keyword>
<keyword id="KW-0472">Membrane</keyword>
<keyword id="KW-0594">Phospholipid biosynthesis</keyword>
<keyword id="KW-1208">Phospholipid metabolism</keyword>
<keyword id="KW-1185">Reference proteome</keyword>
<keyword id="KW-0808">Transferase</keyword>
<name>PLSB_VIBCH</name>
<reference key="1">
    <citation type="journal article" date="2000" name="Nature">
        <title>DNA sequence of both chromosomes of the cholera pathogen Vibrio cholerae.</title>
        <authorList>
            <person name="Heidelberg J.F."/>
            <person name="Eisen J.A."/>
            <person name="Nelson W.C."/>
            <person name="Clayton R.A."/>
            <person name="Gwinn M.L."/>
            <person name="Dodson R.J."/>
            <person name="Haft D.H."/>
            <person name="Hickey E.K."/>
            <person name="Peterson J.D."/>
            <person name="Umayam L.A."/>
            <person name="Gill S.R."/>
            <person name="Nelson K.E."/>
            <person name="Read T.D."/>
            <person name="Tettelin H."/>
            <person name="Richardson D.L."/>
            <person name="Ermolaeva M.D."/>
            <person name="Vamathevan J.J."/>
            <person name="Bass S."/>
            <person name="Qin H."/>
            <person name="Dragoi I."/>
            <person name="Sellers P."/>
            <person name="McDonald L.A."/>
            <person name="Utterback T.R."/>
            <person name="Fleischmann R.D."/>
            <person name="Nierman W.C."/>
            <person name="White O."/>
            <person name="Salzberg S.L."/>
            <person name="Smith H.O."/>
            <person name="Colwell R.R."/>
            <person name="Mekalanos J.J."/>
            <person name="Venter J.C."/>
            <person name="Fraser C.M."/>
        </authorList>
    </citation>
    <scope>NUCLEOTIDE SEQUENCE [LARGE SCALE GENOMIC DNA]</scope>
    <source>
        <strain>ATCC 39315 / El Tor Inaba N16961</strain>
    </source>
</reference>
<sequence length="811" mass="90825">MNSMSSGHLLSRSLLKLPMSVLVKGTAIPSNPIQDLDIDTHKPVIYALPFRSNVDLLTLQTHAKEAGLPDPLEPLMLNGKAFQRYVFIASRPTLLSSDQHVPSDSIALFSELLTEHKLDSELDVQVIPATVLWGRKPGKEGQERPYLQALNGPEKALAVLASGRDCLVRFSPVVSMRYMADTHGTDASIAHKLARVARIHFSRQKLAASGPNLPQRAQLFARLMNSPAIEKAIADEAKSKQIPLEKARKEAHDILDEIAADFSYSLVKKGDRILGWLWNRIYQGLNINNAATVRRLAQDGHEIVYVPCHRSHMDYLLLSYVLYHEGMVPPHIAAGINLNFFPAGPIFRRGGAFFIRRSFKGAPLYSTIFREYLAELFAKGYSVEYFSEGGRSRTGRLLPAKTGMLAMTIQAMLRGLNRPVTLVPVYIGYEHVMEVGTYAKELRGKRKEKENAGLVLRTLRKLRNFGQGYVNFGEPIPLNQFLNETVPQWTQDIDPMGESKPQWMTPTVNKLANRMMTHINDAAAVNAMTLCATALLASRQRALARDNLIKQVDCYLSLLRNVPYSATSTLPSESAEKLVEHAESLDKFVVETDTMGDIISLDRNQSILMTYYRNNIIHLLALPSLIAQLLIRQQSVSLEKVQATVAQIYPFLKQELFLRFEAEELNDLVLRYVAELARQGLVTVEGKTVTLNQAQTQVLMLLGRIISETLQRYAIALNLLVSCPHLGKAELEEKSQEVAQRLGRLHGINAPEFFDKGVFASLFVTLQEQGYLDDQGRCVLETAKPLSRQLYALIYPEVRMTIQESLCQVDA</sequence>
<dbReference type="EC" id="2.3.1.15"/>
<dbReference type="EMBL" id="AE003852">
    <property type="protein sequence ID" value="AAF93271.1"/>
    <property type="molecule type" value="Genomic_DNA"/>
</dbReference>
<dbReference type="PIR" id="B82365">
    <property type="entry name" value="B82365"/>
</dbReference>
<dbReference type="SMR" id="Q9KVP8"/>
<dbReference type="STRING" id="243277.VC_0093"/>
<dbReference type="DNASU" id="2615770"/>
<dbReference type="EnsemblBacteria" id="AAF93271">
    <property type="protein sequence ID" value="AAF93271"/>
    <property type="gene ID" value="VC_0093"/>
</dbReference>
<dbReference type="KEGG" id="vch:VC_0093"/>
<dbReference type="eggNOG" id="COG2937">
    <property type="taxonomic scope" value="Bacteria"/>
</dbReference>
<dbReference type="HOGENOM" id="CLU_015407_0_0_6"/>
<dbReference type="UniPathway" id="UPA00557">
    <property type="reaction ID" value="UER00612"/>
</dbReference>
<dbReference type="Proteomes" id="UP000000584">
    <property type="component" value="Chromosome 1"/>
</dbReference>
<dbReference type="GO" id="GO:0005886">
    <property type="term" value="C:plasma membrane"/>
    <property type="evidence" value="ECO:0007669"/>
    <property type="project" value="UniProtKB-SubCell"/>
</dbReference>
<dbReference type="GO" id="GO:0004366">
    <property type="term" value="F:glycerol-3-phosphate O-acyltransferase activity"/>
    <property type="evidence" value="ECO:0000318"/>
    <property type="project" value="GO_Central"/>
</dbReference>
<dbReference type="GO" id="GO:0016024">
    <property type="term" value="P:CDP-diacylglycerol biosynthetic process"/>
    <property type="evidence" value="ECO:0007669"/>
    <property type="project" value="UniProtKB-UniRule"/>
</dbReference>
<dbReference type="GO" id="GO:0006631">
    <property type="term" value="P:fatty acid metabolic process"/>
    <property type="evidence" value="ECO:0000318"/>
    <property type="project" value="GO_Central"/>
</dbReference>
<dbReference type="GO" id="GO:0008654">
    <property type="term" value="P:phospholipid biosynthetic process"/>
    <property type="evidence" value="ECO:0000318"/>
    <property type="project" value="GO_Central"/>
</dbReference>
<dbReference type="CDD" id="cd07993">
    <property type="entry name" value="LPLAT_DHAPAT-like"/>
    <property type="match status" value="1"/>
</dbReference>
<dbReference type="HAMAP" id="MF_00393">
    <property type="entry name" value="Glyc3P_acyltrans"/>
    <property type="match status" value="1"/>
</dbReference>
<dbReference type="InterPro" id="IPR022284">
    <property type="entry name" value="GPAT/DHAPAT"/>
</dbReference>
<dbReference type="InterPro" id="IPR045520">
    <property type="entry name" value="GPAT/DHAPAT_C"/>
</dbReference>
<dbReference type="InterPro" id="IPR041728">
    <property type="entry name" value="GPAT/DHAPAT_LPLAT"/>
</dbReference>
<dbReference type="InterPro" id="IPR028354">
    <property type="entry name" value="GPAT_PlsB"/>
</dbReference>
<dbReference type="InterPro" id="IPR002123">
    <property type="entry name" value="Plipid/glycerol_acylTrfase"/>
</dbReference>
<dbReference type="NCBIfam" id="TIGR03703">
    <property type="entry name" value="plsB"/>
    <property type="match status" value="1"/>
</dbReference>
<dbReference type="NCBIfam" id="NF003441">
    <property type="entry name" value="PRK04974.1"/>
    <property type="match status" value="1"/>
</dbReference>
<dbReference type="PANTHER" id="PTHR12563:SF17">
    <property type="entry name" value="DIHYDROXYACETONE PHOSPHATE ACYLTRANSFERASE"/>
    <property type="match status" value="1"/>
</dbReference>
<dbReference type="PANTHER" id="PTHR12563">
    <property type="entry name" value="GLYCEROL-3-PHOSPHATE ACYLTRANSFERASE"/>
    <property type="match status" value="1"/>
</dbReference>
<dbReference type="Pfam" id="PF01553">
    <property type="entry name" value="Acyltransferase"/>
    <property type="match status" value="1"/>
</dbReference>
<dbReference type="Pfam" id="PF19277">
    <property type="entry name" value="GPAT_C"/>
    <property type="match status" value="1"/>
</dbReference>
<dbReference type="PIRSF" id="PIRSF500064">
    <property type="entry name" value="GPAT"/>
    <property type="match status" value="1"/>
</dbReference>
<dbReference type="PIRSF" id="PIRSF000437">
    <property type="entry name" value="GPAT_DHAPAT"/>
    <property type="match status" value="1"/>
</dbReference>
<dbReference type="SMART" id="SM00563">
    <property type="entry name" value="PlsC"/>
    <property type="match status" value="1"/>
</dbReference>
<dbReference type="SUPFAM" id="SSF69593">
    <property type="entry name" value="Glycerol-3-phosphate (1)-acyltransferase"/>
    <property type="match status" value="1"/>
</dbReference>
<organism>
    <name type="scientific">Vibrio cholerae serotype O1 (strain ATCC 39315 / El Tor Inaba N16961)</name>
    <dbReference type="NCBI Taxonomy" id="243277"/>
    <lineage>
        <taxon>Bacteria</taxon>
        <taxon>Pseudomonadati</taxon>
        <taxon>Pseudomonadota</taxon>
        <taxon>Gammaproteobacteria</taxon>
        <taxon>Vibrionales</taxon>
        <taxon>Vibrionaceae</taxon>
        <taxon>Vibrio</taxon>
    </lineage>
</organism>
<comment type="catalytic activity">
    <reaction>
        <text>sn-glycerol 3-phosphate + an acyl-CoA = a 1-acyl-sn-glycero-3-phosphate + CoA</text>
        <dbReference type="Rhea" id="RHEA:15325"/>
        <dbReference type="ChEBI" id="CHEBI:57287"/>
        <dbReference type="ChEBI" id="CHEBI:57597"/>
        <dbReference type="ChEBI" id="CHEBI:57970"/>
        <dbReference type="ChEBI" id="CHEBI:58342"/>
        <dbReference type="EC" id="2.3.1.15"/>
    </reaction>
</comment>
<comment type="pathway">
    <text>Phospholipid metabolism; CDP-diacylglycerol biosynthesis; CDP-diacylglycerol from sn-glycerol 3-phosphate: step 1/3.</text>
</comment>
<comment type="subcellular location">
    <subcellularLocation>
        <location evidence="1">Cell inner membrane</location>
        <topology evidence="1">Peripheral membrane protein</topology>
        <orientation evidence="1">Cytoplasmic side</orientation>
    </subcellularLocation>
</comment>
<comment type="domain">
    <text evidence="1">The HXXXXD motif is essential for acyltransferase activity and may constitute the binding site for the phosphate moiety of the glycerol-3-phosphate.</text>
</comment>
<comment type="similarity">
    <text evidence="2">Belongs to the GPAT/DAPAT family.</text>
</comment>